<accession>P06922</accession>
<comment type="function">
    <text evidence="2 3 4 6 8">Contributes to multiple aspects of the viral life cycle including viral genome amplification, suppression of suprabasal cell differentiation and egress of newly formed virions. Induces host cell cycle arrest at the G2 phase by associating with and preventing the nuclear entry of host CDK1/cyclin B1 complexes. Inhibits cellular DNA replication by preventing loading of host replication licensing proteins MCM2 and MCM7 onto chromatin. Within the cytoplasm, associates with host kinase SRPK1, a splicing factor regulator, and inhibits its activity. Therefore, E4 favors expression of late viral transcripts by inhibiting SRPK1-mediated phosphorylation of host serine-arginine (SR) proteins that have critical roles in mRNA metabolism. Late in the infectious cycle, E4 also acts to diminish the integrity of the keratinocyte by disrupting the keratin cytoskeleton and inducing apoptosis through alteration of mitochondrial function to facilitate egress of the newly formed virions.</text>
</comment>
<comment type="subunit">
    <text evidence="4 6 7 8">Assembles into oligomeric complexes. Interacts with host CDK1. Interacts with host SRPK1; this interaction may favor expression of late viral transcripts. Interacts with host cytokeratin components KRT8 and KRT18.</text>
</comment>
<comment type="subcellular location">
    <subcellularLocation>
        <location evidence="6">Host cytoplasm</location>
    </subcellularLocation>
    <subcellularLocation>
        <location evidence="6">Host nucleus</location>
    </subcellularLocation>
</comment>
<comment type="induction">
    <text>Expressed in the middle to upper layers of host infected epithelium.</text>
</comment>
<comment type="domain">
    <text evidence="2">The LLXLL motif located in the N-terminal of the protein is responsible for the association with host cytokeratins.</text>
</comment>
<comment type="PTM">
    <text evidence="7">Phosphorylated by host ERK. The phosphorylation triggers a structural change that enhances keratin binding and protein stability.</text>
</comment>
<comment type="miscellaneous">
    <text>The major E4 form is first synthesized as an E1^E4 fusion protein from spliced E1^E4 transcripts, such that the first few amino acids of the E4 protein are derived from the N terminus of E1.</text>
</comment>
<comment type="similarity">
    <text evidence="9">Belongs to the papillomaviridae E4 protein family.</text>
</comment>
<protein>
    <recommendedName>
        <fullName>Protein E4</fullName>
    </recommendedName>
    <alternativeName>
        <fullName>E1^E4</fullName>
    </alternativeName>
</protein>
<gene>
    <name type="primary">E4</name>
</gene>
<sequence>MADPAAATKYPLLKLLGSTWPTTPPRPIPKPSPWAPKKHRRLSSDQDQSQTPETPATPLSCCTETQWTVLQSSLHLTAHTKDGLTVIVTLHP</sequence>
<organism>
    <name type="scientific">Human papillomavirus type 16</name>
    <dbReference type="NCBI Taxonomy" id="333760"/>
    <lineage>
        <taxon>Viruses</taxon>
        <taxon>Monodnaviria</taxon>
        <taxon>Shotokuvirae</taxon>
        <taxon>Cossaviricota</taxon>
        <taxon>Papovaviricetes</taxon>
        <taxon>Zurhausenvirales</taxon>
        <taxon>Papillomaviridae</taxon>
        <taxon>Firstpapillomavirinae</taxon>
        <taxon>Alphapapillomavirus</taxon>
        <taxon>Alphapapillomavirus 9</taxon>
    </lineage>
</organism>
<reference key="1">
    <citation type="journal article" date="1985" name="Virology">
        <title>Human papillomavirus type 16 DNA sequence.</title>
        <authorList>
            <person name="Seedorf K."/>
            <person name="Krammer G."/>
            <person name="Durst M."/>
            <person name="Suhai S."/>
            <person name="Rowekamp W.G."/>
        </authorList>
    </citation>
    <scope>NUCLEOTIDE SEQUENCE [GENOMIC DNA]</scope>
</reference>
<reference key="2">
    <citation type="submission" date="2002-08" db="EMBL/GenBank/DDBJ databases">
        <title>Cloning and sequencing of non-European human papillomavirus (HPV) variant complete genomes from cervicovaginal cells by an overlapping PCR method.</title>
        <authorList>
            <person name="Terai M."/>
            <person name="Fu L."/>
            <person name="Ma Z."/>
            <person name="Burk R.D."/>
        </authorList>
    </citation>
    <scope>NUCLEOTIDE SEQUENCE [GENOMIC DNA]</scope>
    <source>
        <strain>Isolate European German 131</strain>
    </source>
</reference>
<reference key="3">
    <citation type="journal article" date="1990" name="J. Gen. Virol.">
        <title>Expression of the human papillomavirus type 16 genome in SK-v cells, a line derived from a vulvar intraepithelial neoplasia.</title>
        <authorList>
            <person name="Schneider-Maunoury S."/>
            <person name="Pehau-Arnaudet G."/>
            <person name="Breitburd F."/>
            <person name="Orth G."/>
        </authorList>
    </citation>
    <scope>NUCLEOTIDE SEQUENCE [GENOMIC DNA] OF 3-92</scope>
</reference>
<reference key="4">
    <citation type="journal article" date="1994" name="J. Virol.">
        <title>Mutational analysis of human papillomavirus E4 proteins: identification of structural features important in the formation of cytoplasmic E4/cytokeratin networks in epithelial cells.</title>
        <authorList>
            <person name="Roberts S."/>
            <person name="Ashmole I."/>
            <person name="Gibson L.J."/>
            <person name="Rookes S.M."/>
            <person name="Barton G.J."/>
            <person name="Gallimore P.H."/>
        </authorList>
    </citation>
    <scope>MOTIF</scope>
</reference>
<reference key="5">
    <citation type="journal article" date="2002" name="J. Virol.">
        <title>Identification of a G(2) arrest domain in the E1 wedge E4 protein of human papillomavirus type 16.</title>
        <authorList>
            <person name="Davy C.E."/>
            <person name="Jackson D.J."/>
            <person name="Wang Q."/>
            <person name="Raj K."/>
            <person name="Masterson P.J."/>
            <person name="Fenner N.F."/>
            <person name="Southern S."/>
            <person name="Cuthill S."/>
            <person name="Millar J.B."/>
            <person name="Doorbar J."/>
        </authorList>
    </citation>
    <scope>FUNCTION</scope>
    <scope>DOMAIN</scope>
    <scope>MUTAGENESIS OF THR-23</scope>
</reference>
<reference key="6">
    <citation type="journal article" date="2004" name="J. Virol.">
        <title>Functional analysis of the human papillomavirus type 16 E1=E4 protein provides a mechanism for in vivo and in vitro keratin filament reorganization.</title>
        <authorList>
            <person name="Wang Q."/>
            <person name="Griffin H."/>
            <person name="Southern S."/>
            <person name="Jackson D."/>
            <person name="Martin A."/>
            <person name="McIntosh P."/>
            <person name="Davy C."/>
            <person name="Masterson P.J."/>
            <person name="Walker P.A."/>
            <person name="Laskey P."/>
            <person name="Omary M.B."/>
            <person name="Doorbar J."/>
        </authorList>
    </citation>
    <scope>FUNCTION</scope>
</reference>
<reference key="7">
    <citation type="journal article" date="2005" name="J. Virol.">
        <title>Human papillomavirus type 16 E1 E4-induced G2 arrest is associated with cytoplasmic retention of active Cdk1/cyclin B1 complexes.</title>
        <authorList>
            <person name="Davy C.E."/>
            <person name="Jackson D.J."/>
            <person name="Raj K."/>
            <person name="Peh W.L."/>
            <person name="Southern S.A."/>
            <person name="Das P."/>
            <person name="Sorathia R."/>
            <person name="Laskey P."/>
            <person name="Middleton K."/>
            <person name="Nakahara T."/>
            <person name="Wang Q."/>
            <person name="Masterson P.J."/>
            <person name="Lambert P.F."/>
            <person name="Cuthill S."/>
            <person name="Millar J.B."/>
            <person name="Doorbar J."/>
        </authorList>
    </citation>
    <scope>INTERACTION WITH HOST CDK1</scope>
    <scope>FUNCTION</scope>
</reference>
<reference key="8">
    <citation type="journal article" date="2006" name="Virology">
        <title>HPV16 E1--E4 protein is phosphorylated by Cdk2/cyclin A and relocalizes this complex to the cytoplasm.</title>
        <authorList>
            <person name="Davy C.E."/>
            <person name="Ayub M."/>
            <person name="Jackson D.J."/>
            <person name="Das P."/>
            <person name="McIntosh P."/>
            <person name="Doorbar J."/>
        </authorList>
    </citation>
    <scope>FUNCTION</scope>
    <scope>PHOSPHORYLATION AT SER-32</scope>
    <scope>SUBCELLULAR LOCATION</scope>
</reference>
<reference key="9">
    <citation type="journal article" date="2007" name="J. Virol.">
        <title>The E1circumflexE4 protein of human papillomavirus interacts with the serine-arginine-specific protein kinase SRPK1.</title>
        <authorList>
            <person name="Bell I."/>
            <person name="Martin A."/>
            <person name="Roberts S."/>
        </authorList>
    </citation>
    <scope>FUNCTION</scope>
    <scope>INTERACTION WITH HOST SRPK1</scope>
    <scope>SUBCELLULAR LOCATION</scope>
</reference>
<reference key="10">
    <citation type="journal article" date="2009" name="J. Virol.">
        <title>Phosphorylation of the human papillomavirus type 16 E1--E4 protein at T57 by ERK triggers a structural change that enhances keratin binding and protein stability.</title>
        <authorList>
            <person name="Wang Q."/>
            <person name="Kennedy A."/>
            <person name="Das P."/>
            <person name="McIntosh P.B."/>
            <person name="Howell S.A."/>
            <person name="Isaacson E.R."/>
            <person name="Hinz S.A."/>
            <person name="Davy C."/>
            <person name="Doorbar J."/>
        </authorList>
    </citation>
    <scope>PHOSPHORYLATION AT THR-57</scope>
    <scope>INTERACTION WITH HOST CYTOKERATIN</scope>
</reference>
<reference key="11">
    <citation type="journal article" date="2014" name="J. Virol.">
        <title>Human papillomavirus type 1 E1^E4 protein is a potent inhibitor of the serine-arginine (SR) protein kinase SRPK1 and inhibits phosphorylation of host SR proteins and of the viral transcription and replication regulator E2.</title>
        <authorList>
            <person name="Prescott E.L."/>
            <person name="Brimacombe C.L."/>
            <person name="Hartley M."/>
            <person name="Bell I."/>
            <person name="Graham S."/>
            <person name="Roberts S."/>
        </authorList>
    </citation>
    <scope>FUNCTION</scope>
    <scope>INTERACTION WITH HOST SRPK1</scope>
</reference>
<feature type="chain" id="PRO_0000133265" description="Protein E4">
    <location>
        <begin position="1"/>
        <end position="92"/>
    </location>
</feature>
<feature type="region of interest" description="Involved in cell cycle arrest">
    <location>
        <begin position="14"/>
        <end position="42"/>
    </location>
</feature>
<feature type="region of interest" description="Disordered" evidence="1">
    <location>
        <begin position="16"/>
        <end position="59"/>
    </location>
</feature>
<feature type="short sequence motif" description="Association with host cytokeratins">
    <location>
        <begin position="9"/>
        <end position="12"/>
    </location>
</feature>
<feature type="compositionally biased region" description="Pro residues" evidence="1">
    <location>
        <begin position="22"/>
        <end position="34"/>
    </location>
</feature>
<feature type="compositionally biased region" description="Polar residues" evidence="1">
    <location>
        <begin position="45"/>
        <end position="54"/>
    </location>
</feature>
<feature type="modified residue" description="Phosphoserine; by host" evidence="5">
    <location>
        <position position="32"/>
    </location>
</feature>
<feature type="modified residue" description="Phosphothreonine; by host" evidence="7">
    <location>
        <position position="57"/>
    </location>
</feature>
<feature type="mutagenesis site" description="Loss of E4-mediated G(2) arrest." evidence="2">
    <original>T</original>
    <variation>A</variation>
    <location>
        <position position="23"/>
    </location>
</feature>
<organismHost>
    <name type="scientific">Homo sapiens</name>
    <name type="common">Human</name>
    <dbReference type="NCBI Taxonomy" id="9606"/>
</organismHost>
<keyword id="KW-0244">Early protein</keyword>
<keyword id="KW-1035">Host cytoplasm</keyword>
<keyword id="KW-1079">Host G2/M cell cycle arrest by virus</keyword>
<keyword id="KW-1048">Host nucleus</keyword>
<keyword id="KW-0945">Host-virus interaction</keyword>
<keyword id="KW-1121">Modulation of host cell cycle by virus</keyword>
<keyword id="KW-0597">Phosphoprotein</keyword>
<keyword id="KW-1185">Reference proteome</keyword>
<dbReference type="EMBL" id="K02718">
    <property type="protein sequence ID" value="AAA46937.1"/>
    <property type="status" value="ALT_SEQ"/>
    <property type="molecule type" value="Genomic_DNA"/>
</dbReference>
<dbReference type="EMBL" id="AF536179">
    <property type="protein sequence ID" value="AAQ10716.1"/>
    <property type="status" value="ALT_SEQ"/>
    <property type="molecule type" value="Genomic_DNA"/>
</dbReference>
<dbReference type="EMBL" id="D00735">
    <property type="protein sequence ID" value="BAA00634.1"/>
    <property type="status" value="ALT_SEQ"/>
    <property type="molecule type" value="Genomic_DNA"/>
</dbReference>
<dbReference type="PIR" id="A22355">
    <property type="entry name" value="W4WLHS"/>
</dbReference>
<dbReference type="BioGRID" id="4263555">
    <property type="interactions" value="10"/>
</dbReference>
<dbReference type="iPTMnet" id="P06922"/>
<dbReference type="KEGG" id="vg:1489076"/>
<dbReference type="Proteomes" id="UP000009251">
    <property type="component" value="Segment"/>
</dbReference>
<dbReference type="Proteomes" id="UP000106302">
    <property type="component" value="Genome"/>
</dbReference>
<dbReference type="GO" id="GO:0030430">
    <property type="term" value="C:host cell cytoplasm"/>
    <property type="evidence" value="ECO:0000314"/>
    <property type="project" value="CACAO"/>
</dbReference>
<dbReference type="GO" id="GO:0042025">
    <property type="term" value="C:host cell nucleus"/>
    <property type="evidence" value="ECO:0007669"/>
    <property type="project" value="UniProtKB-SubCell"/>
</dbReference>
<dbReference type="GO" id="GO:0039592">
    <property type="term" value="P:symbiont-mediated arrest of host cell cycle during G2/M transition"/>
    <property type="evidence" value="ECO:0007669"/>
    <property type="project" value="UniProtKB-KW"/>
</dbReference>
<dbReference type="InterPro" id="IPR003861">
    <property type="entry name" value="Papilloma_E4"/>
</dbReference>
<dbReference type="Pfam" id="PF02711">
    <property type="entry name" value="Pap_E4"/>
    <property type="match status" value="1"/>
</dbReference>
<name>VE4_HPV16</name>
<proteinExistence type="evidence at protein level"/>
<evidence type="ECO:0000256" key="1">
    <source>
        <dbReference type="SAM" id="MobiDB-lite"/>
    </source>
</evidence>
<evidence type="ECO:0000269" key="2">
    <source>
    </source>
</evidence>
<evidence type="ECO:0000269" key="3">
    <source>
    </source>
</evidence>
<evidence type="ECO:0000269" key="4">
    <source>
    </source>
</evidence>
<evidence type="ECO:0000269" key="5">
    <source>
    </source>
</evidence>
<evidence type="ECO:0000269" key="6">
    <source>
    </source>
</evidence>
<evidence type="ECO:0000269" key="7">
    <source>
    </source>
</evidence>
<evidence type="ECO:0000269" key="8">
    <source>
    </source>
</evidence>
<evidence type="ECO:0000305" key="9"/>